<protein>
    <recommendedName>
        <fullName evidence="1">Succinate--CoA ligase [ADP-forming] subunit beta</fullName>
        <ecNumber evidence="1">6.2.1.5</ecNumber>
    </recommendedName>
    <alternativeName>
        <fullName evidence="1">Succinyl-CoA synthetase subunit beta</fullName>
        <shortName evidence="1">SCS-beta</shortName>
    </alternativeName>
</protein>
<reference key="1">
    <citation type="journal article" date="2009" name="Genome Biol.">
        <title>Genomic and genetic analyses of diversity and plant interactions of Pseudomonas fluorescens.</title>
        <authorList>
            <person name="Silby M.W."/>
            <person name="Cerdeno-Tarraga A.M."/>
            <person name="Vernikos G.S."/>
            <person name="Giddens S.R."/>
            <person name="Jackson R.W."/>
            <person name="Preston G.M."/>
            <person name="Zhang X.-X."/>
            <person name="Moon C.D."/>
            <person name="Gehrig S.M."/>
            <person name="Godfrey S.A.C."/>
            <person name="Knight C.G."/>
            <person name="Malone J.G."/>
            <person name="Robinson Z."/>
            <person name="Spiers A.J."/>
            <person name="Harris S."/>
            <person name="Challis G.L."/>
            <person name="Yaxley A.M."/>
            <person name="Harris D."/>
            <person name="Seeger K."/>
            <person name="Murphy L."/>
            <person name="Rutter S."/>
            <person name="Squares R."/>
            <person name="Quail M.A."/>
            <person name="Saunders E."/>
            <person name="Mavromatis K."/>
            <person name="Brettin T.S."/>
            <person name="Bentley S.D."/>
            <person name="Hothersall J."/>
            <person name="Stephens E."/>
            <person name="Thomas C.M."/>
            <person name="Parkhill J."/>
            <person name="Levy S.B."/>
            <person name="Rainey P.B."/>
            <person name="Thomson N.R."/>
        </authorList>
    </citation>
    <scope>NUCLEOTIDE SEQUENCE [LARGE SCALE GENOMIC DNA]</scope>
    <source>
        <strain>Pf0-1</strain>
    </source>
</reference>
<accession>Q3KFU6</accession>
<name>SUCC_PSEPF</name>
<proteinExistence type="inferred from homology"/>
<organism>
    <name type="scientific">Pseudomonas fluorescens (strain Pf0-1)</name>
    <dbReference type="NCBI Taxonomy" id="205922"/>
    <lineage>
        <taxon>Bacteria</taxon>
        <taxon>Pseudomonadati</taxon>
        <taxon>Pseudomonadota</taxon>
        <taxon>Gammaproteobacteria</taxon>
        <taxon>Pseudomonadales</taxon>
        <taxon>Pseudomonadaceae</taxon>
        <taxon>Pseudomonas</taxon>
    </lineage>
</organism>
<evidence type="ECO:0000255" key="1">
    <source>
        <dbReference type="HAMAP-Rule" id="MF_00558"/>
    </source>
</evidence>
<dbReference type="EC" id="6.2.1.5" evidence="1"/>
<dbReference type="EMBL" id="CP000094">
    <property type="protein sequence ID" value="ABA73360.1"/>
    <property type="molecule type" value="Genomic_DNA"/>
</dbReference>
<dbReference type="RefSeq" id="WP_011333118.1">
    <property type="nucleotide sequence ID" value="NC_007492.2"/>
</dbReference>
<dbReference type="SMR" id="Q3KFU6"/>
<dbReference type="KEGG" id="pfo:Pfl01_1617"/>
<dbReference type="eggNOG" id="COG0045">
    <property type="taxonomic scope" value="Bacteria"/>
</dbReference>
<dbReference type="HOGENOM" id="CLU_037430_0_2_6"/>
<dbReference type="UniPathway" id="UPA00223">
    <property type="reaction ID" value="UER00999"/>
</dbReference>
<dbReference type="Proteomes" id="UP000002704">
    <property type="component" value="Chromosome"/>
</dbReference>
<dbReference type="GO" id="GO:0005829">
    <property type="term" value="C:cytosol"/>
    <property type="evidence" value="ECO:0007669"/>
    <property type="project" value="TreeGrafter"/>
</dbReference>
<dbReference type="GO" id="GO:0042709">
    <property type="term" value="C:succinate-CoA ligase complex"/>
    <property type="evidence" value="ECO:0007669"/>
    <property type="project" value="TreeGrafter"/>
</dbReference>
<dbReference type="GO" id="GO:0005524">
    <property type="term" value="F:ATP binding"/>
    <property type="evidence" value="ECO:0007669"/>
    <property type="project" value="UniProtKB-UniRule"/>
</dbReference>
<dbReference type="GO" id="GO:0000287">
    <property type="term" value="F:magnesium ion binding"/>
    <property type="evidence" value="ECO:0007669"/>
    <property type="project" value="UniProtKB-UniRule"/>
</dbReference>
<dbReference type="GO" id="GO:0004775">
    <property type="term" value="F:succinate-CoA ligase (ADP-forming) activity"/>
    <property type="evidence" value="ECO:0007669"/>
    <property type="project" value="UniProtKB-UniRule"/>
</dbReference>
<dbReference type="GO" id="GO:0004776">
    <property type="term" value="F:succinate-CoA ligase (GDP-forming) activity"/>
    <property type="evidence" value="ECO:0007669"/>
    <property type="project" value="RHEA"/>
</dbReference>
<dbReference type="GO" id="GO:0006104">
    <property type="term" value="P:succinyl-CoA metabolic process"/>
    <property type="evidence" value="ECO:0007669"/>
    <property type="project" value="TreeGrafter"/>
</dbReference>
<dbReference type="GO" id="GO:0006099">
    <property type="term" value="P:tricarboxylic acid cycle"/>
    <property type="evidence" value="ECO:0007669"/>
    <property type="project" value="UniProtKB-UniRule"/>
</dbReference>
<dbReference type="FunFam" id="3.30.1490.20:FF:000002">
    <property type="entry name" value="Succinate--CoA ligase [ADP-forming] subunit beta"/>
    <property type="match status" value="1"/>
</dbReference>
<dbReference type="FunFam" id="3.30.470.20:FF:000002">
    <property type="entry name" value="Succinate--CoA ligase [ADP-forming] subunit beta"/>
    <property type="match status" value="1"/>
</dbReference>
<dbReference type="FunFam" id="3.40.50.261:FF:000001">
    <property type="entry name" value="Succinate--CoA ligase [ADP-forming] subunit beta"/>
    <property type="match status" value="1"/>
</dbReference>
<dbReference type="Gene3D" id="3.30.1490.20">
    <property type="entry name" value="ATP-grasp fold, A domain"/>
    <property type="match status" value="1"/>
</dbReference>
<dbReference type="Gene3D" id="3.30.470.20">
    <property type="entry name" value="ATP-grasp fold, B domain"/>
    <property type="match status" value="1"/>
</dbReference>
<dbReference type="Gene3D" id="3.40.50.261">
    <property type="entry name" value="Succinyl-CoA synthetase domains"/>
    <property type="match status" value="1"/>
</dbReference>
<dbReference type="HAMAP" id="MF_00558">
    <property type="entry name" value="Succ_CoA_beta"/>
    <property type="match status" value="1"/>
</dbReference>
<dbReference type="InterPro" id="IPR011761">
    <property type="entry name" value="ATP-grasp"/>
</dbReference>
<dbReference type="InterPro" id="IPR013650">
    <property type="entry name" value="ATP-grasp_succ-CoA_synth-type"/>
</dbReference>
<dbReference type="InterPro" id="IPR013815">
    <property type="entry name" value="ATP_grasp_subdomain_1"/>
</dbReference>
<dbReference type="InterPro" id="IPR017866">
    <property type="entry name" value="Succ-CoA_synthase_bsu_CS"/>
</dbReference>
<dbReference type="InterPro" id="IPR005811">
    <property type="entry name" value="SUCC_ACL_C"/>
</dbReference>
<dbReference type="InterPro" id="IPR005809">
    <property type="entry name" value="Succ_CoA_ligase-like_bsu"/>
</dbReference>
<dbReference type="InterPro" id="IPR016102">
    <property type="entry name" value="Succinyl-CoA_synth-like"/>
</dbReference>
<dbReference type="NCBIfam" id="NF001913">
    <property type="entry name" value="PRK00696.1"/>
    <property type="match status" value="1"/>
</dbReference>
<dbReference type="NCBIfam" id="TIGR01016">
    <property type="entry name" value="sucCoAbeta"/>
    <property type="match status" value="1"/>
</dbReference>
<dbReference type="PANTHER" id="PTHR11815:SF10">
    <property type="entry name" value="SUCCINATE--COA LIGASE [GDP-FORMING] SUBUNIT BETA, MITOCHONDRIAL"/>
    <property type="match status" value="1"/>
</dbReference>
<dbReference type="PANTHER" id="PTHR11815">
    <property type="entry name" value="SUCCINYL-COA SYNTHETASE BETA CHAIN"/>
    <property type="match status" value="1"/>
</dbReference>
<dbReference type="Pfam" id="PF08442">
    <property type="entry name" value="ATP-grasp_2"/>
    <property type="match status" value="1"/>
</dbReference>
<dbReference type="Pfam" id="PF00549">
    <property type="entry name" value="Ligase_CoA"/>
    <property type="match status" value="1"/>
</dbReference>
<dbReference type="PIRSF" id="PIRSF001554">
    <property type="entry name" value="SucCS_beta"/>
    <property type="match status" value="1"/>
</dbReference>
<dbReference type="SUPFAM" id="SSF56059">
    <property type="entry name" value="Glutathione synthetase ATP-binding domain-like"/>
    <property type="match status" value="1"/>
</dbReference>
<dbReference type="SUPFAM" id="SSF52210">
    <property type="entry name" value="Succinyl-CoA synthetase domains"/>
    <property type="match status" value="1"/>
</dbReference>
<dbReference type="PROSITE" id="PS50975">
    <property type="entry name" value="ATP_GRASP"/>
    <property type="match status" value="1"/>
</dbReference>
<dbReference type="PROSITE" id="PS01217">
    <property type="entry name" value="SUCCINYL_COA_LIG_3"/>
    <property type="match status" value="1"/>
</dbReference>
<comment type="function">
    <text evidence="1">Succinyl-CoA synthetase functions in the citric acid cycle (TCA), coupling the hydrolysis of succinyl-CoA to the synthesis of either ATP or GTP and thus represents the only step of substrate-level phosphorylation in the TCA. The beta subunit provides nucleotide specificity of the enzyme and binds the substrate succinate, while the binding sites for coenzyme A and phosphate are found in the alpha subunit.</text>
</comment>
<comment type="catalytic activity">
    <reaction evidence="1">
        <text>succinate + ATP + CoA = succinyl-CoA + ADP + phosphate</text>
        <dbReference type="Rhea" id="RHEA:17661"/>
        <dbReference type="ChEBI" id="CHEBI:30031"/>
        <dbReference type="ChEBI" id="CHEBI:30616"/>
        <dbReference type="ChEBI" id="CHEBI:43474"/>
        <dbReference type="ChEBI" id="CHEBI:57287"/>
        <dbReference type="ChEBI" id="CHEBI:57292"/>
        <dbReference type="ChEBI" id="CHEBI:456216"/>
        <dbReference type="EC" id="6.2.1.5"/>
    </reaction>
    <physiologicalReaction direction="right-to-left" evidence="1">
        <dbReference type="Rhea" id="RHEA:17663"/>
    </physiologicalReaction>
</comment>
<comment type="catalytic activity">
    <reaction evidence="1">
        <text>GTP + succinate + CoA = succinyl-CoA + GDP + phosphate</text>
        <dbReference type="Rhea" id="RHEA:22120"/>
        <dbReference type="ChEBI" id="CHEBI:30031"/>
        <dbReference type="ChEBI" id="CHEBI:37565"/>
        <dbReference type="ChEBI" id="CHEBI:43474"/>
        <dbReference type="ChEBI" id="CHEBI:57287"/>
        <dbReference type="ChEBI" id="CHEBI:57292"/>
        <dbReference type="ChEBI" id="CHEBI:58189"/>
    </reaction>
    <physiologicalReaction direction="right-to-left" evidence="1">
        <dbReference type="Rhea" id="RHEA:22122"/>
    </physiologicalReaction>
</comment>
<comment type="cofactor">
    <cofactor evidence="1">
        <name>Mg(2+)</name>
        <dbReference type="ChEBI" id="CHEBI:18420"/>
    </cofactor>
    <text evidence="1">Binds 1 Mg(2+) ion per subunit.</text>
</comment>
<comment type="pathway">
    <text evidence="1">Carbohydrate metabolism; tricarboxylic acid cycle; succinate from succinyl-CoA (ligase route): step 1/1.</text>
</comment>
<comment type="subunit">
    <text evidence="1">Heterotetramer of two alpha and two beta subunits.</text>
</comment>
<comment type="similarity">
    <text evidence="1">Belongs to the succinate/malate CoA ligase beta subunit family.</text>
</comment>
<keyword id="KW-0067">ATP-binding</keyword>
<keyword id="KW-0436">Ligase</keyword>
<keyword id="KW-0460">Magnesium</keyword>
<keyword id="KW-0479">Metal-binding</keyword>
<keyword id="KW-0547">Nucleotide-binding</keyword>
<keyword id="KW-0816">Tricarboxylic acid cycle</keyword>
<sequence>MNLHEYQGKQLFAEYGLPVSTGFAVDTPEAAAEACDKIGGNEWVVKAQVHAGGRGKSGGVKLVRSKEDAKAFAQQWLGKRLVTYQTDANGQPVTKILVESCTDIAKELYLGAVVDRSSRRIVFMASTEGGVDIEKIAHDTPEKILKATIDPLVGAQPFQGRELAFQLGLEGKQVAQFAKIFVGLAKLFKDHDLALLEVNPLVIKADGDLHCLDAKINIDANAMYRQPKLKTFHDPSQDDPREAHAAKFELNYVALEGNIGCMVNGAGLAMGTMDIVNLHGGKPANFLDVGGGATKERVTEAFKIILSDSNVAAVLVNIFGGIVRCDMIAEGIIGAVKEVGVKIPVVVRLEGNNAELGAKVLAESGLNIIAATSLTDAAQQVVKAAEGK</sequence>
<feature type="chain" id="PRO_1000082172" description="Succinate--CoA ligase [ADP-forming] subunit beta">
    <location>
        <begin position="1"/>
        <end position="388"/>
    </location>
</feature>
<feature type="domain" description="ATP-grasp" evidence="1">
    <location>
        <begin position="9"/>
        <end position="244"/>
    </location>
</feature>
<feature type="binding site" evidence="1">
    <location>
        <position position="46"/>
    </location>
    <ligand>
        <name>ATP</name>
        <dbReference type="ChEBI" id="CHEBI:30616"/>
    </ligand>
</feature>
<feature type="binding site" evidence="1">
    <location>
        <begin position="53"/>
        <end position="55"/>
    </location>
    <ligand>
        <name>ATP</name>
        <dbReference type="ChEBI" id="CHEBI:30616"/>
    </ligand>
</feature>
<feature type="binding site" evidence="1">
    <location>
        <position position="99"/>
    </location>
    <ligand>
        <name>ATP</name>
        <dbReference type="ChEBI" id="CHEBI:30616"/>
    </ligand>
</feature>
<feature type="binding site" evidence="1">
    <location>
        <position position="102"/>
    </location>
    <ligand>
        <name>ATP</name>
        <dbReference type="ChEBI" id="CHEBI:30616"/>
    </ligand>
</feature>
<feature type="binding site" evidence="1">
    <location>
        <position position="107"/>
    </location>
    <ligand>
        <name>ATP</name>
        <dbReference type="ChEBI" id="CHEBI:30616"/>
    </ligand>
</feature>
<feature type="binding site" evidence="1">
    <location>
        <position position="199"/>
    </location>
    <ligand>
        <name>Mg(2+)</name>
        <dbReference type="ChEBI" id="CHEBI:18420"/>
    </ligand>
</feature>
<feature type="binding site" evidence="1">
    <location>
        <position position="213"/>
    </location>
    <ligand>
        <name>Mg(2+)</name>
        <dbReference type="ChEBI" id="CHEBI:18420"/>
    </ligand>
</feature>
<feature type="binding site" evidence="1">
    <location>
        <position position="264"/>
    </location>
    <ligand>
        <name>substrate</name>
        <note>ligand shared with subunit alpha</note>
    </ligand>
</feature>
<feature type="binding site" evidence="1">
    <location>
        <begin position="321"/>
        <end position="323"/>
    </location>
    <ligand>
        <name>substrate</name>
        <note>ligand shared with subunit alpha</note>
    </ligand>
</feature>
<gene>
    <name evidence="1" type="primary">sucC</name>
    <name type="ordered locus">Pfl01_1617</name>
</gene>